<feature type="chain" id="PRO_0000198914" description="Rho-related protein racG">
    <location>
        <begin position="1"/>
        <end position="196"/>
    </location>
</feature>
<feature type="propeptide" id="PRO_0000281261" description="Removed in mature form" evidence="2">
    <location>
        <begin position="197"/>
        <end position="199"/>
    </location>
</feature>
<feature type="short sequence motif" description="Switch 1" evidence="3">
    <location>
        <begin position="26"/>
        <end position="37"/>
    </location>
</feature>
<feature type="short sequence motif" description="Switch 2" evidence="3">
    <location>
        <begin position="57"/>
        <end position="75"/>
    </location>
</feature>
<feature type="binding site" evidence="3">
    <location>
        <position position="13"/>
    </location>
    <ligand>
        <name>GTP</name>
        <dbReference type="ChEBI" id="CHEBI:37565"/>
    </ligand>
</feature>
<feature type="binding site" evidence="3">
    <location>
        <position position="15"/>
    </location>
    <ligand>
        <name>GTP</name>
        <dbReference type="ChEBI" id="CHEBI:37565"/>
    </ligand>
</feature>
<feature type="binding site" evidence="3">
    <location>
        <position position="16"/>
    </location>
    <ligand>
        <name>GTP</name>
        <dbReference type="ChEBI" id="CHEBI:37565"/>
    </ligand>
</feature>
<feature type="binding site" evidence="3">
    <location>
        <position position="17"/>
    </location>
    <ligand>
        <name>GTP</name>
        <dbReference type="ChEBI" id="CHEBI:37565"/>
    </ligand>
</feature>
<feature type="binding site" evidence="3">
    <location>
        <position position="17"/>
    </location>
    <ligand>
        <name>Mg(2+)</name>
        <dbReference type="ChEBI" id="CHEBI:18420"/>
    </ligand>
</feature>
<feature type="binding site" evidence="3">
    <location>
        <position position="18"/>
    </location>
    <ligand>
        <name>GTP</name>
        <dbReference type="ChEBI" id="CHEBI:37565"/>
    </ligand>
</feature>
<feature type="binding site" evidence="3">
    <location>
        <position position="32"/>
    </location>
    <ligand>
        <name>GTP</name>
        <dbReference type="ChEBI" id="CHEBI:37565"/>
    </ligand>
</feature>
<feature type="binding site" evidence="3">
    <location>
        <position position="35"/>
    </location>
    <ligand>
        <name>GTP</name>
        <dbReference type="ChEBI" id="CHEBI:37565"/>
    </ligand>
</feature>
<feature type="binding site" evidence="3">
    <location>
        <position position="35"/>
    </location>
    <ligand>
        <name>Mg(2+)</name>
        <dbReference type="ChEBI" id="CHEBI:18420"/>
    </ligand>
</feature>
<feature type="binding site" evidence="3">
    <location>
        <position position="116"/>
    </location>
    <ligand>
        <name>GTP</name>
        <dbReference type="ChEBI" id="CHEBI:37565"/>
    </ligand>
</feature>
<feature type="binding site" evidence="3">
    <location>
        <position position="118"/>
    </location>
    <ligand>
        <name>GTP</name>
        <dbReference type="ChEBI" id="CHEBI:37565"/>
    </ligand>
</feature>
<feature type="binding site" evidence="3">
    <location>
        <position position="159"/>
    </location>
    <ligand>
        <name>GTP</name>
        <dbReference type="ChEBI" id="CHEBI:37565"/>
    </ligand>
</feature>
<feature type="modified residue" description="Cysteine methyl ester" evidence="1">
    <location>
        <position position="196"/>
    </location>
</feature>
<feature type="lipid moiety-binding region" description="S-geranylgeranyl cysteine" evidence="2">
    <location>
        <position position="196"/>
    </location>
</feature>
<comment type="function">
    <text evidence="2 4">Small GTPase which cycles between active GTP-bound and inactive GDP-bound states (By similarity). Involved in actin cytoskeleton remodeling during capping of surface receptors and uroid formation (PubMed:9601102).</text>
</comment>
<comment type="catalytic activity">
    <reaction evidence="2">
        <text>GTP + H2O = GDP + phosphate + H(+)</text>
        <dbReference type="Rhea" id="RHEA:19669"/>
        <dbReference type="ChEBI" id="CHEBI:15377"/>
        <dbReference type="ChEBI" id="CHEBI:15378"/>
        <dbReference type="ChEBI" id="CHEBI:37565"/>
        <dbReference type="ChEBI" id="CHEBI:43474"/>
        <dbReference type="ChEBI" id="CHEBI:58189"/>
        <dbReference type="EC" id="3.6.5.2"/>
    </reaction>
    <physiologicalReaction direction="left-to-right" evidence="2">
        <dbReference type="Rhea" id="RHEA:19670"/>
    </physiologicalReaction>
</comment>
<comment type="cofactor">
    <cofactor evidence="3">
        <name>Mg(2+)</name>
        <dbReference type="ChEBI" id="CHEBI:18420"/>
    </cofactor>
</comment>
<comment type="activity regulation">
    <text evidence="2">Regulated by guanine nucleotide exchange factors (GEFs) which promote the exchange of bound GDP for free GTP, GTPase activating proteins (GAPs) which increase the GTP hydrolysis activity, and GDP dissociation inhibitors which inhibit the dissociation of the nucleotide from the GTPase.</text>
</comment>
<comment type="subcellular location">
    <subcellularLocation>
        <location evidence="2">Cell membrane</location>
        <topology evidence="2">Lipid-anchor</topology>
        <orientation evidence="2">Cytoplasmic side</orientation>
    </subcellularLocation>
    <subcellularLocation>
        <location evidence="7">Cytoplasm</location>
        <location evidence="7">Cytoskeleton</location>
    </subcellularLocation>
    <subcellularLocation>
        <location evidence="4">Cytoplasm</location>
    </subcellularLocation>
    <text evidence="4">Localizes to the uroid during capping of surface receptors.</text>
</comment>
<comment type="domain">
    <text evidence="3">The switch 1 and switch 2 motifs undergo large conformational changes during GTP/GDP cycle and play important roles in the interaction with downstream effectors.</text>
</comment>
<comment type="similarity">
    <text evidence="6">Belongs to the small GTPase superfamily. Rho family.</text>
</comment>
<comment type="sequence caution" evidence="6">
    <conflict type="erroneous initiation">
        <sequence resource="EMBL-CDS" id="EAL46413"/>
    </conflict>
    <text>Extended N-terminus.</text>
</comment>
<gene>
    <name evidence="5" type="primary">RACG</name>
    <name evidence="9" type="ORF">EHI_129750</name>
</gene>
<reference evidence="8" key="1">
    <citation type="journal article" date="1998" name="J. Cell Sci.">
        <title>The small GTP-binding protein RacG regulates uroid formation in the protozoan parasite Entamoeba histolytica.</title>
        <authorList>
            <person name="Guillen N."/>
            <person name="Boquet P."/>
            <person name="Sansonetti P."/>
        </authorList>
    </citation>
    <scope>NUCLEOTIDE SEQUENCE [GENOMIC DNA]</scope>
    <scope>FUNCTION</scope>
    <scope>SUBCELLULAR LOCATION</scope>
    <source>
        <strain evidence="8">ATCC 30459 / HM-1:IMSS / ABRM</strain>
    </source>
</reference>
<reference evidence="9" key="2">
    <citation type="journal article" date="2005" name="Nature">
        <title>The genome of the protist parasite Entamoeba histolytica.</title>
        <authorList>
            <person name="Loftus B.J."/>
            <person name="Anderson I."/>
            <person name="Davies R."/>
            <person name="Alsmark U.C."/>
            <person name="Samuelson J."/>
            <person name="Amedeo P."/>
            <person name="Roncaglia P."/>
            <person name="Berriman M."/>
            <person name="Hirt R.P."/>
            <person name="Mann B.J."/>
            <person name="Nozaki T."/>
            <person name="Suh B."/>
            <person name="Pop M."/>
            <person name="Duchene M."/>
            <person name="Ackers J."/>
            <person name="Tannich E."/>
            <person name="Leippe M."/>
            <person name="Hofer M."/>
            <person name="Bruchhaus I."/>
            <person name="Willhoeft U."/>
            <person name="Bhattacharya A."/>
            <person name="Chillingworth T."/>
            <person name="Churcher C.M."/>
            <person name="Hance Z."/>
            <person name="Harris B."/>
            <person name="Harris D."/>
            <person name="Jagels K."/>
            <person name="Moule S."/>
            <person name="Mungall K.L."/>
            <person name="Ormond D."/>
            <person name="Squares R."/>
            <person name="Whitehead S."/>
            <person name="Quail M.A."/>
            <person name="Rabbinowitsch E."/>
            <person name="Norbertczak H."/>
            <person name="Price C."/>
            <person name="Wang Z."/>
            <person name="Guillen N."/>
            <person name="Gilchrist C."/>
            <person name="Stroup S.E."/>
            <person name="Bhattacharya S."/>
            <person name="Lohia A."/>
            <person name="Foster P.G."/>
            <person name="Sicheritz-Ponten T."/>
            <person name="Weber C."/>
            <person name="Singh U."/>
            <person name="Mukherjee C."/>
            <person name="El-Sayed N.M.A."/>
            <person name="Petri W.A."/>
            <person name="Clark C.G."/>
            <person name="Embley T.M."/>
            <person name="Barrell B.G."/>
            <person name="Fraser C.M."/>
            <person name="Hall N."/>
        </authorList>
    </citation>
    <scope>NUCLEOTIDE SEQUENCE [LARGE SCALE GENOMIC DNA]</scope>
    <source>
        <strain evidence="9">ATCC 30459 / HM-1:IMSS / ABRM</strain>
    </source>
</reference>
<evidence type="ECO:0000250" key="1">
    <source>
        <dbReference type="UniProtKB" id="P61585"/>
    </source>
</evidence>
<evidence type="ECO:0000250" key="2">
    <source>
        <dbReference type="UniProtKB" id="P63000"/>
    </source>
</evidence>
<evidence type="ECO:0000250" key="3">
    <source>
        <dbReference type="UniProtKB" id="Q24816"/>
    </source>
</evidence>
<evidence type="ECO:0000269" key="4">
    <source>
    </source>
</evidence>
<evidence type="ECO:0000303" key="5">
    <source>
    </source>
</evidence>
<evidence type="ECO:0000305" key="6"/>
<evidence type="ECO:0000305" key="7">
    <source>
    </source>
</evidence>
<evidence type="ECO:0000312" key="8">
    <source>
        <dbReference type="EMBL" id="AAC24704.1"/>
    </source>
</evidence>
<evidence type="ECO:0000312" key="9">
    <source>
        <dbReference type="EMBL" id="EAL46413.1"/>
    </source>
</evidence>
<accession>O76321</accession>
<accession>A0A175JSP0</accession>
<accession>C4M5Q7</accession>
<dbReference type="EC" id="3.6.5.2" evidence="2"/>
<dbReference type="EMBL" id="AF055340">
    <property type="protein sequence ID" value="AAC24704.1"/>
    <property type="molecule type" value="Genomic_DNA"/>
</dbReference>
<dbReference type="EMBL" id="DS571283">
    <property type="protein sequence ID" value="EAL46413.1"/>
    <property type="status" value="ALT_INIT"/>
    <property type="molecule type" value="Genomic_DNA"/>
</dbReference>
<dbReference type="RefSeq" id="XP_651800.1">
    <property type="nucleotide sequence ID" value="XM_646708.2"/>
</dbReference>
<dbReference type="SMR" id="O76321"/>
<dbReference type="STRING" id="5759.C4M5Q7"/>
<dbReference type="EnsemblProtists" id="GAT96761">
    <property type="protein sequence ID" value="GAT96761"/>
    <property type="gene ID" value="CL6EHI_129750"/>
</dbReference>
<dbReference type="EnsemblProtists" id="rna_EHI_129750-1">
    <property type="protein sequence ID" value="rna_EHI_129750-1"/>
    <property type="gene ID" value="EHI_129750"/>
</dbReference>
<dbReference type="GeneID" id="3406121"/>
<dbReference type="KEGG" id="ehi:EHI_129750"/>
<dbReference type="VEuPathDB" id="AmoebaDB:EHI5A_135270"/>
<dbReference type="VEuPathDB" id="AmoebaDB:EHI7A_090820"/>
<dbReference type="VEuPathDB" id="AmoebaDB:EHI8A_093900"/>
<dbReference type="VEuPathDB" id="AmoebaDB:EHI_129750"/>
<dbReference type="VEuPathDB" id="AmoebaDB:KM1_167560"/>
<dbReference type="eggNOG" id="KOG0393">
    <property type="taxonomic scope" value="Eukaryota"/>
</dbReference>
<dbReference type="HOGENOM" id="CLU_041217_21_2_1"/>
<dbReference type="OrthoDB" id="8830751at2759"/>
<dbReference type="Proteomes" id="UP000001926">
    <property type="component" value="Partially assembled WGS sequence"/>
</dbReference>
<dbReference type="GO" id="GO:0042995">
    <property type="term" value="C:cell projection"/>
    <property type="evidence" value="ECO:0000318"/>
    <property type="project" value="GO_Central"/>
</dbReference>
<dbReference type="GO" id="GO:0031410">
    <property type="term" value="C:cytoplasmic vesicle"/>
    <property type="evidence" value="ECO:0000318"/>
    <property type="project" value="GO_Central"/>
</dbReference>
<dbReference type="GO" id="GO:0005856">
    <property type="term" value="C:cytoskeleton"/>
    <property type="evidence" value="ECO:0000318"/>
    <property type="project" value="GO_Central"/>
</dbReference>
<dbReference type="GO" id="GO:0005886">
    <property type="term" value="C:plasma membrane"/>
    <property type="evidence" value="ECO:0000318"/>
    <property type="project" value="GO_Central"/>
</dbReference>
<dbReference type="GO" id="GO:0005525">
    <property type="term" value="F:GTP binding"/>
    <property type="evidence" value="ECO:0000318"/>
    <property type="project" value="GO_Central"/>
</dbReference>
<dbReference type="GO" id="GO:0003924">
    <property type="term" value="F:GTPase activity"/>
    <property type="evidence" value="ECO:0000318"/>
    <property type="project" value="GO_Central"/>
</dbReference>
<dbReference type="GO" id="GO:0046872">
    <property type="term" value="F:metal ion binding"/>
    <property type="evidence" value="ECO:0007669"/>
    <property type="project" value="UniProtKB-KW"/>
</dbReference>
<dbReference type="GO" id="GO:0019901">
    <property type="term" value="F:protein kinase binding"/>
    <property type="evidence" value="ECO:0000318"/>
    <property type="project" value="GO_Central"/>
</dbReference>
<dbReference type="GO" id="GO:0007015">
    <property type="term" value="P:actin filament organization"/>
    <property type="evidence" value="ECO:0000318"/>
    <property type="project" value="GO_Central"/>
</dbReference>
<dbReference type="GO" id="GO:0030865">
    <property type="term" value="P:cortical cytoskeleton organization"/>
    <property type="evidence" value="ECO:0000318"/>
    <property type="project" value="GO_Central"/>
</dbReference>
<dbReference type="GO" id="GO:0007163">
    <property type="term" value="P:establishment or maintenance of cell polarity"/>
    <property type="evidence" value="ECO:0000318"/>
    <property type="project" value="GO_Central"/>
</dbReference>
<dbReference type="GO" id="GO:0000281">
    <property type="term" value="P:mitotic cytokinesis"/>
    <property type="evidence" value="ECO:0000318"/>
    <property type="project" value="GO_Central"/>
</dbReference>
<dbReference type="GO" id="GO:0032956">
    <property type="term" value="P:regulation of actin cytoskeleton organization"/>
    <property type="evidence" value="ECO:0000318"/>
    <property type="project" value="GO_Central"/>
</dbReference>
<dbReference type="GO" id="GO:0008360">
    <property type="term" value="P:regulation of cell shape"/>
    <property type="evidence" value="ECO:0000318"/>
    <property type="project" value="GO_Central"/>
</dbReference>
<dbReference type="GO" id="GO:0007165">
    <property type="term" value="P:signal transduction"/>
    <property type="evidence" value="ECO:0000318"/>
    <property type="project" value="GO_Central"/>
</dbReference>
<dbReference type="GO" id="GO:0007264">
    <property type="term" value="P:small GTPase-mediated signal transduction"/>
    <property type="evidence" value="ECO:0007669"/>
    <property type="project" value="InterPro"/>
</dbReference>
<dbReference type="CDD" id="cd00157">
    <property type="entry name" value="Rho"/>
    <property type="match status" value="1"/>
</dbReference>
<dbReference type="FunFam" id="3.40.50.300:FF:000118">
    <property type="entry name" value="Rho-related GTP-binding protein RhoG"/>
    <property type="match status" value="1"/>
</dbReference>
<dbReference type="Gene3D" id="3.40.50.300">
    <property type="entry name" value="P-loop containing nucleotide triphosphate hydrolases"/>
    <property type="match status" value="1"/>
</dbReference>
<dbReference type="InterPro" id="IPR027417">
    <property type="entry name" value="P-loop_NTPase"/>
</dbReference>
<dbReference type="InterPro" id="IPR005225">
    <property type="entry name" value="Small_GTP-bd"/>
</dbReference>
<dbReference type="InterPro" id="IPR001806">
    <property type="entry name" value="Small_GTPase"/>
</dbReference>
<dbReference type="InterPro" id="IPR003578">
    <property type="entry name" value="Small_GTPase_Rho"/>
</dbReference>
<dbReference type="NCBIfam" id="TIGR00231">
    <property type="entry name" value="small_GTP"/>
    <property type="match status" value="1"/>
</dbReference>
<dbReference type="PANTHER" id="PTHR24072">
    <property type="entry name" value="RHO FAMILY GTPASE"/>
    <property type="match status" value="1"/>
</dbReference>
<dbReference type="Pfam" id="PF00071">
    <property type="entry name" value="Ras"/>
    <property type="match status" value="1"/>
</dbReference>
<dbReference type="PRINTS" id="PR00449">
    <property type="entry name" value="RASTRNSFRMNG"/>
</dbReference>
<dbReference type="SMART" id="SM00175">
    <property type="entry name" value="RAB"/>
    <property type="match status" value="1"/>
</dbReference>
<dbReference type="SMART" id="SM00176">
    <property type="entry name" value="RAN"/>
    <property type="match status" value="1"/>
</dbReference>
<dbReference type="SMART" id="SM00173">
    <property type="entry name" value="RAS"/>
    <property type="match status" value="1"/>
</dbReference>
<dbReference type="SMART" id="SM00174">
    <property type="entry name" value="RHO"/>
    <property type="match status" value="1"/>
</dbReference>
<dbReference type="SUPFAM" id="SSF52540">
    <property type="entry name" value="P-loop containing nucleoside triphosphate hydrolases"/>
    <property type="match status" value="1"/>
</dbReference>
<dbReference type="PROSITE" id="PS51420">
    <property type="entry name" value="RHO"/>
    <property type="match status" value="1"/>
</dbReference>
<proteinExistence type="inferred from homology"/>
<name>RACG_ENTH1</name>
<sequence>MRPVKLVIVGDGAVGKTCMLISYTTNAFPNEYIPTVFENYNSSLVVDDVKINLGLWDTAGQEDYDRLRPLSYPSTDVFLVCFSVIAPASYENVEGKWKPEIDQHCPNVPIILVGTKIDIRDDPEQVKRLAEKNIVPIQPPQGDELAKKIGAVKYIECSALTQANLKLVFEEAVRAVLAKAAKEPTGKKEKGGKKGCSLF</sequence>
<keyword id="KW-1003">Cell membrane</keyword>
<keyword id="KW-0963">Cytoplasm</keyword>
<keyword id="KW-0206">Cytoskeleton</keyword>
<keyword id="KW-0342">GTP-binding</keyword>
<keyword id="KW-0378">Hydrolase</keyword>
<keyword id="KW-0449">Lipoprotein</keyword>
<keyword id="KW-0460">Magnesium</keyword>
<keyword id="KW-0472">Membrane</keyword>
<keyword id="KW-0479">Metal-binding</keyword>
<keyword id="KW-0488">Methylation</keyword>
<keyword id="KW-0547">Nucleotide-binding</keyword>
<keyword id="KW-0636">Prenylation</keyword>
<keyword id="KW-1185">Reference proteome</keyword>
<protein>
    <recommendedName>
        <fullName>Rho-related protein racG</fullName>
        <ecNumber evidence="2">3.6.5.2</ecNumber>
    </recommendedName>
</protein>
<organism evidence="9">
    <name type="scientific">Entamoeba histolytica (strain ATCC 30459 / HM-1:IMSS / ABRM)</name>
    <dbReference type="NCBI Taxonomy" id="294381"/>
    <lineage>
        <taxon>Eukaryota</taxon>
        <taxon>Amoebozoa</taxon>
        <taxon>Evosea</taxon>
        <taxon>Archamoebae</taxon>
        <taxon>Mastigamoebida</taxon>
        <taxon>Entamoebidae</taxon>
        <taxon>Entamoeba</taxon>
    </lineage>
</organism>